<comment type="function">
    <text evidence="1">Specifically methylates the N4 position of cytidine in position 1402 (C1402) of 16S rRNA.</text>
</comment>
<comment type="catalytic activity">
    <reaction evidence="1">
        <text>cytidine(1402) in 16S rRNA + S-adenosyl-L-methionine = N(4)-methylcytidine(1402) in 16S rRNA + S-adenosyl-L-homocysteine + H(+)</text>
        <dbReference type="Rhea" id="RHEA:42928"/>
        <dbReference type="Rhea" id="RHEA-COMP:10286"/>
        <dbReference type="Rhea" id="RHEA-COMP:10287"/>
        <dbReference type="ChEBI" id="CHEBI:15378"/>
        <dbReference type="ChEBI" id="CHEBI:57856"/>
        <dbReference type="ChEBI" id="CHEBI:59789"/>
        <dbReference type="ChEBI" id="CHEBI:74506"/>
        <dbReference type="ChEBI" id="CHEBI:82748"/>
        <dbReference type="EC" id="2.1.1.199"/>
    </reaction>
</comment>
<comment type="subcellular location">
    <subcellularLocation>
        <location evidence="1">Cytoplasm</location>
    </subcellularLocation>
</comment>
<comment type="similarity">
    <text evidence="1">Belongs to the methyltransferase superfamily. RsmH family.</text>
</comment>
<accession>B0BYA0</accession>
<organism>
    <name type="scientific">Rickettsia rickettsii (strain Iowa)</name>
    <dbReference type="NCBI Taxonomy" id="452659"/>
    <lineage>
        <taxon>Bacteria</taxon>
        <taxon>Pseudomonadati</taxon>
        <taxon>Pseudomonadota</taxon>
        <taxon>Alphaproteobacteria</taxon>
        <taxon>Rickettsiales</taxon>
        <taxon>Rickettsiaceae</taxon>
        <taxon>Rickettsieae</taxon>
        <taxon>Rickettsia</taxon>
        <taxon>spotted fever group</taxon>
    </lineage>
</organism>
<feature type="chain" id="PRO_1000083997" description="Ribosomal RNA small subunit methyltransferase H">
    <location>
        <begin position="1"/>
        <end position="307"/>
    </location>
</feature>
<feature type="binding site" evidence="1">
    <location>
        <begin position="33"/>
        <end position="35"/>
    </location>
    <ligand>
        <name>S-adenosyl-L-methionine</name>
        <dbReference type="ChEBI" id="CHEBI:59789"/>
    </ligand>
</feature>
<feature type="binding site" evidence="1">
    <location>
        <position position="51"/>
    </location>
    <ligand>
        <name>S-adenosyl-L-methionine</name>
        <dbReference type="ChEBI" id="CHEBI:59789"/>
    </ligand>
</feature>
<feature type="binding site" evidence="1">
    <location>
        <position position="82"/>
    </location>
    <ligand>
        <name>S-adenosyl-L-methionine</name>
        <dbReference type="ChEBI" id="CHEBI:59789"/>
    </ligand>
</feature>
<feature type="binding site" evidence="1">
    <location>
        <position position="96"/>
    </location>
    <ligand>
        <name>S-adenosyl-L-methionine</name>
        <dbReference type="ChEBI" id="CHEBI:59789"/>
    </ligand>
</feature>
<feature type="binding site" evidence="1">
    <location>
        <position position="103"/>
    </location>
    <ligand>
        <name>S-adenosyl-L-methionine</name>
        <dbReference type="ChEBI" id="CHEBI:59789"/>
    </ligand>
</feature>
<gene>
    <name evidence="1" type="primary">rsmH</name>
    <name type="synonym">mraW</name>
    <name type="ordered locus">RrIowa_1020</name>
</gene>
<protein>
    <recommendedName>
        <fullName evidence="1">Ribosomal RNA small subunit methyltransferase H</fullName>
        <ecNumber evidence="1">2.1.1.199</ecNumber>
    </recommendedName>
    <alternativeName>
        <fullName evidence="1">16S rRNA m(4)C1402 methyltransferase</fullName>
    </alternativeName>
    <alternativeName>
        <fullName evidence="1">rRNA (cytosine-N(4)-)-methyltransferase RsmH</fullName>
    </alternativeName>
</protein>
<dbReference type="EC" id="2.1.1.199" evidence="1"/>
<dbReference type="EMBL" id="CP000766">
    <property type="protein sequence ID" value="ABY72826.1"/>
    <property type="molecule type" value="Genomic_DNA"/>
</dbReference>
<dbReference type="RefSeq" id="WP_012262480.1">
    <property type="nucleotide sequence ID" value="NC_010263.3"/>
</dbReference>
<dbReference type="SMR" id="B0BYA0"/>
<dbReference type="GeneID" id="79937550"/>
<dbReference type="KEGG" id="rrj:RrIowa_1020"/>
<dbReference type="eggNOG" id="COG0275">
    <property type="taxonomic scope" value="Bacteria"/>
</dbReference>
<dbReference type="HOGENOM" id="CLU_038422_1_1_5"/>
<dbReference type="Proteomes" id="UP000000796">
    <property type="component" value="Chromosome"/>
</dbReference>
<dbReference type="GO" id="GO:0005737">
    <property type="term" value="C:cytoplasm"/>
    <property type="evidence" value="ECO:0007669"/>
    <property type="project" value="UniProtKB-SubCell"/>
</dbReference>
<dbReference type="GO" id="GO:0071424">
    <property type="term" value="F:rRNA (cytosine-N4-)-methyltransferase activity"/>
    <property type="evidence" value="ECO:0007669"/>
    <property type="project" value="UniProtKB-UniRule"/>
</dbReference>
<dbReference type="GO" id="GO:0070475">
    <property type="term" value="P:rRNA base methylation"/>
    <property type="evidence" value="ECO:0007669"/>
    <property type="project" value="UniProtKB-UniRule"/>
</dbReference>
<dbReference type="CDD" id="cd02440">
    <property type="entry name" value="AdoMet_MTases"/>
    <property type="match status" value="1"/>
</dbReference>
<dbReference type="FunFam" id="1.10.150.170:FF:000003">
    <property type="entry name" value="Ribosomal RNA small subunit methyltransferase H"/>
    <property type="match status" value="1"/>
</dbReference>
<dbReference type="Gene3D" id="1.10.150.170">
    <property type="entry name" value="Putative methyltransferase TM0872, insert domain"/>
    <property type="match status" value="1"/>
</dbReference>
<dbReference type="Gene3D" id="3.40.50.150">
    <property type="entry name" value="Vaccinia Virus protein VP39"/>
    <property type="match status" value="1"/>
</dbReference>
<dbReference type="HAMAP" id="MF_01007">
    <property type="entry name" value="16SrRNA_methyltr_H"/>
    <property type="match status" value="1"/>
</dbReference>
<dbReference type="InterPro" id="IPR002903">
    <property type="entry name" value="RsmH"/>
</dbReference>
<dbReference type="InterPro" id="IPR023397">
    <property type="entry name" value="SAM-dep_MeTrfase_MraW_recog"/>
</dbReference>
<dbReference type="InterPro" id="IPR029063">
    <property type="entry name" value="SAM-dependent_MTases_sf"/>
</dbReference>
<dbReference type="NCBIfam" id="TIGR00006">
    <property type="entry name" value="16S rRNA (cytosine(1402)-N(4))-methyltransferase RsmH"/>
    <property type="match status" value="1"/>
</dbReference>
<dbReference type="PANTHER" id="PTHR11265:SF0">
    <property type="entry name" value="12S RRNA N4-METHYLCYTIDINE METHYLTRANSFERASE"/>
    <property type="match status" value="1"/>
</dbReference>
<dbReference type="PANTHER" id="PTHR11265">
    <property type="entry name" value="S-ADENOSYL-METHYLTRANSFERASE MRAW"/>
    <property type="match status" value="1"/>
</dbReference>
<dbReference type="Pfam" id="PF01795">
    <property type="entry name" value="Methyltransf_5"/>
    <property type="match status" value="1"/>
</dbReference>
<dbReference type="PIRSF" id="PIRSF004486">
    <property type="entry name" value="MraW"/>
    <property type="match status" value="1"/>
</dbReference>
<dbReference type="SUPFAM" id="SSF81799">
    <property type="entry name" value="Putative methyltransferase TM0872, insert domain"/>
    <property type="match status" value="1"/>
</dbReference>
<dbReference type="SUPFAM" id="SSF53335">
    <property type="entry name" value="S-adenosyl-L-methionine-dependent methyltransferases"/>
    <property type="match status" value="1"/>
</dbReference>
<name>RSMH_RICRO</name>
<proteinExistence type="inferred from homology"/>
<evidence type="ECO:0000255" key="1">
    <source>
        <dbReference type="HAMAP-Rule" id="MF_01007"/>
    </source>
</evidence>
<sequence>MIQSHVSVMLNEMLEALSPKAGESYLDCTFGAGGYSKAILESCNCYVTALDRDPNVIKRAEEIQQNYGERFDFVETNFADSFAKLKEKKFDGIVLDLGVSSMQLDIADRGFSFLHDGPLDMRMSGQGLSAEEFVNAAEEKELADVIYKYGDESFSRRIAKRIVEYRKTARIDSTGKLAEIVRSSIGFRKGKIDPATKTFQAIRIYVNDELGELEQFLVNVKNILKKDGRLVVVSFHSLEDRIVKNFFKENSEKPVVRSKYAKDDMTIDPNKWLKIITNKALAPSDKEVGLNIRARSAKLRAAKAIYE</sequence>
<keyword id="KW-0963">Cytoplasm</keyword>
<keyword id="KW-0489">Methyltransferase</keyword>
<keyword id="KW-0698">rRNA processing</keyword>
<keyword id="KW-0949">S-adenosyl-L-methionine</keyword>
<keyword id="KW-0808">Transferase</keyword>
<reference key="1">
    <citation type="journal article" date="2008" name="Infect. Immun.">
        <title>Genomic comparison of virulent Rickettsia rickettsii Sheila Smith and avirulent Rickettsia rickettsii Iowa.</title>
        <authorList>
            <person name="Ellison D.W."/>
            <person name="Clark T.R."/>
            <person name="Sturdevant D.E."/>
            <person name="Virtaneva K."/>
            <person name="Porcella S.F."/>
            <person name="Hackstadt T."/>
        </authorList>
    </citation>
    <scope>NUCLEOTIDE SEQUENCE [LARGE SCALE GENOMIC DNA]</scope>
    <source>
        <strain>Iowa</strain>
    </source>
</reference>